<dbReference type="EC" id="7.3.2.1" evidence="1"/>
<dbReference type="EMBL" id="CP000108">
    <property type="protein sequence ID" value="ABB27771.1"/>
    <property type="molecule type" value="Genomic_DNA"/>
</dbReference>
<dbReference type="SMR" id="Q3ATA4"/>
<dbReference type="STRING" id="340177.Cag_0498"/>
<dbReference type="KEGG" id="cch:Cag_0498"/>
<dbReference type="eggNOG" id="COG1117">
    <property type="taxonomic scope" value="Bacteria"/>
</dbReference>
<dbReference type="HOGENOM" id="CLU_000604_1_22_10"/>
<dbReference type="OrthoDB" id="594396at2"/>
<dbReference type="GO" id="GO:0005886">
    <property type="term" value="C:plasma membrane"/>
    <property type="evidence" value="ECO:0007669"/>
    <property type="project" value="UniProtKB-SubCell"/>
</dbReference>
<dbReference type="GO" id="GO:0005524">
    <property type="term" value="F:ATP binding"/>
    <property type="evidence" value="ECO:0007669"/>
    <property type="project" value="UniProtKB-KW"/>
</dbReference>
<dbReference type="GO" id="GO:0016887">
    <property type="term" value="F:ATP hydrolysis activity"/>
    <property type="evidence" value="ECO:0007669"/>
    <property type="project" value="InterPro"/>
</dbReference>
<dbReference type="GO" id="GO:0015415">
    <property type="term" value="F:ATPase-coupled phosphate ion transmembrane transporter activity"/>
    <property type="evidence" value="ECO:0007669"/>
    <property type="project" value="UniProtKB-EC"/>
</dbReference>
<dbReference type="GO" id="GO:0035435">
    <property type="term" value="P:phosphate ion transmembrane transport"/>
    <property type="evidence" value="ECO:0007669"/>
    <property type="project" value="InterPro"/>
</dbReference>
<dbReference type="CDD" id="cd03260">
    <property type="entry name" value="ABC_PstB_phosphate_transporter"/>
    <property type="match status" value="1"/>
</dbReference>
<dbReference type="Gene3D" id="3.40.50.300">
    <property type="entry name" value="P-loop containing nucleotide triphosphate hydrolases"/>
    <property type="match status" value="1"/>
</dbReference>
<dbReference type="InterPro" id="IPR003593">
    <property type="entry name" value="AAA+_ATPase"/>
</dbReference>
<dbReference type="InterPro" id="IPR003439">
    <property type="entry name" value="ABC_transporter-like_ATP-bd"/>
</dbReference>
<dbReference type="InterPro" id="IPR017871">
    <property type="entry name" value="ABC_transporter-like_CS"/>
</dbReference>
<dbReference type="InterPro" id="IPR027417">
    <property type="entry name" value="P-loop_NTPase"/>
</dbReference>
<dbReference type="InterPro" id="IPR005670">
    <property type="entry name" value="PstB-like"/>
</dbReference>
<dbReference type="NCBIfam" id="TIGR00972">
    <property type="entry name" value="3a0107s01c2"/>
    <property type="match status" value="1"/>
</dbReference>
<dbReference type="PANTHER" id="PTHR43423">
    <property type="entry name" value="ABC TRANSPORTER I FAMILY MEMBER 17"/>
    <property type="match status" value="1"/>
</dbReference>
<dbReference type="PANTHER" id="PTHR43423:SF1">
    <property type="entry name" value="ABC TRANSPORTER I FAMILY MEMBER 17"/>
    <property type="match status" value="1"/>
</dbReference>
<dbReference type="Pfam" id="PF00005">
    <property type="entry name" value="ABC_tran"/>
    <property type="match status" value="1"/>
</dbReference>
<dbReference type="SMART" id="SM00382">
    <property type="entry name" value="AAA"/>
    <property type="match status" value="1"/>
</dbReference>
<dbReference type="SUPFAM" id="SSF52540">
    <property type="entry name" value="P-loop containing nucleoside triphosphate hydrolases"/>
    <property type="match status" value="1"/>
</dbReference>
<dbReference type="PROSITE" id="PS00211">
    <property type="entry name" value="ABC_TRANSPORTER_1"/>
    <property type="match status" value="1"/>
</dbReference>
<dbReference type="PROSITE" id="PS50893">
    <property type="entry name" value="ABC_TRANSPORTER_2"/>
    <property type="match status" value="1"/>
</dbReference>
<dbReference type="PROSITE" id="PS51238">
    <property type="entry name" value="PSTB"/>
    <property type="match status" value="1"/>
</dbReference>
<reference key="1">
    <citation type="submission" date="2005-08" db="EMBL/GenBank/DDBJ databases">
        <title>Complete sequence of Chlorobium chlorochromatii CaD3.</title>
        <authorList>
            <consortium name="US DOE Joint Genome Institute"/>
            <person name="Copeland A."/>
            <person name="Lucas S."/>
            <person name="Lapidus A."/>
            <person name="Barry K."/>
            <person name="Detter J.C."/>
            <person name="Glavina T."/>
            <person name="Hammon N."/>
            <person name="Israni S."/>
            <person name="Pitluck S."/>
            <person name="Bryant D."/>
            <person name="Schmutz J."/>
            <person name="Larimer F."/>
            <person name="Land M."/>
            <person name="Kyrpides N."/>
            <person name="Ivanova N."/>
            <person name="Richardson P."/>
        </authorList>
    </citation>
    <scope>NUCLEOTIDE SEQUENCE [LARGE SCALE GENOMIC DNA]</scope>
    <source>
        <strain>CaD3</strain>
    </source>
</reference>
<sequence>MDVKNKMVAESMSFYYDDYQALKNISIAFPENQVTALIGPSGCGKSTFLRCLNRMNDLVPKTRMSGRIMLGDLNIYNPKIDVVDLRKKIGMVFQKPNPFPKSIYDNIAYAPRIHGLVRTRQETDALVEDSLHKAGLWNEVKDRLNDLGTALSGGQQQRLCIARAIAMQPDVLLMDEPASALDPIATQKIEDLVLELKKRFTIIIVTHNMQQASRASDYTAFFYLGELIEFGKTDQIFTKPREKQTEDYITGRFG</sequence>
<feature type="chain" id="PRO_0000272435" description="Phosphate import ATP-binding protein PstB">
    <location>
        <begin position="1"/>
        <end position="254"/>
    </location>
</feature>
<feature type="domain" description="ABC transporter" evidence="1">
    <location>
        <begin position="7"/>
        <end position="249"/>
    </location>
</feature>
<feature type="binding site" evidence="1">
    <location>
        <begin position="39"/>
        <end position="46"/>
    </location>
    <ligand>
        <name>ATP</name>
        <dbReference type="ChEBI" id="CHEBI:30616"/>
    </ligand>
</feature>
<keyword id="KW-0067">ATP-binding</keyword>
<keyword id="KW-0997">Cell inner membrane</keyword>
<keyword id="KW-1003">Cell membrane</keyword>
<keyword id="KW-0472">Membrane</keyword>
<keyword id="KW-0547">Nucleotide-binding</keyword>
<keyword id="KW-0592">Phosphate transport</keyword>
<keyword id="KW-1278">Translocase</keyword>
<keyword id="KW-0813">Transport</keyword>
<organism>
    <name type="scientific">Chlorobium chlorochromatii (strain CaD3)</name>
    <dbReference type="NCBI Taxonomy" id="340177"/>
    <lineage>
        <taxon>Bacteria</taxon>
        <taxon>Pseudomonadati</taxon>
        <taxon>Chlorobiota</taxon>
        <taxon>Chlorobiia</taxon>
        <taxon>Chlorobiales</taxon>
        <taxon>Chlorobiaceae</taxon>
        <taxon>Chlorobium/Pelodictyon group</taxon>
        <taxon>Chlorobium</taxon>
    </lineage>
</organism>
<evidence type="ECO:0000255" key="1">
    <source>
        <dbReference type="HAMAP-Rule" id="MF_01702"/>
    </source>
</evidence>
<comment type="function">
    <text evidence="1">Part of the ABC transporter complex PstSACB involved in phosphate import. Responsible for energy coupling to the transport system.</text>
</comment>
<comment type="catalytic activity">
    <reaction evidence="1">
        <text>phosphate(out) + ATP + H2O = ADP + 2 phosphate(in) + H(+)</text>
        <dbReference type="Rhea" id="RHEA:24440"/>
        <dbReference type="ChEBI" id="CHEBI:15377"/>
        <dbReference type="ChEBI" id="CHEBI:15378"/>
        <dbReference type="ChEBI" id="CHEBI:30616"/>
        <dbReference type="ChEBI" id="CHEBI:43474"/>
        <dbReference type="ChEBI" id="CHEBI:456216"/>
        <dbReference type="EC" id="7.3.2.1"/>
    </reaction>
</comment>
<comment type="subunit">
    <text evidence="1">The complex is composed of two ATP-binding proteins (PstB), two transmembrane proteins (PstC and PstA) and a solute-binding protein (PstS).</text>
</comment>
<comment type="subcellular location">
    <subcellularLocation>
        <location evidence="1">Cell inner membrane</location>
        <topology evidence="1">Peripheral membrane protein</topology>
    </subcellularLocation>
</comment>
<comment type="similarity">
    <text evidence="1">Belongs to the ABC transporter superfamily. Phosphate importer (TC 3.A.1.7) family.</text>
</comment>
<protein>
    <recommendedName>
        <fullName evidence="1">Phosphate import ATP-binding protein PstB</fullName>
        <ecNumber evidence="1">7.3.2.1</ecNumber>
    </recommendedName>
    <alternativeName>
        <fullName evidence="1">ABC phosphate transporter</fullName>
    </alternativeName>
    <alternativeName>
        <fullName evidence="1">Phosphate-transporting ATPase</fullName>
    </alternativeName>
</protein>
<gene>
    <name evidence="1" type="primary">pstB</name>
    <name type="ordered locus">Cag_0498</name>
</gene>
<proteinExistence type="inferred from homology"/>
<name>PSTB_CHLCH</name>
<accession>Q3ATA4</accession>